<accession>C6A1L5</accession>
<name>PYRI_THESM</name>
<keyword id="KW-0479">Metal-binding</keyword>
<keyword id="KW-0665">Pyrimidine biosynthesis</keyword>
<keyword id="KW-1185">Reference proteome</keyword>
<keyword id="KW-0862">Zinc</keyword>
<sequence>MKELKVSAINKGTVIDHIPSGKGLKVLEILNLPEDNTILVAINVKSQKLGRKDIIKVEGKILNEDEVNKIALIAPTATVNIIDKWEVVEKRNVEVPDEIVGIIKCANPNCITNYEEVKPKFKVISKKPLKLKCHYCERTMEENMVVKNLL</sequence>
<dbReference type="EMBL" id="CP001463">
    <property type="protein sequence ID" value="ACS89510.1"/>
    <property type="molecule type" value="Genomic_DNA"/>
</dbReference>
<dbReference type="RefSeq" id="WP_015848730.1">
    <property type="nucleotide sequence ID" value="NC_012883.1"/>
</dbReference>
<dbReference type="SMR" id="C6A1L5"/>
<dbReference type="STRING" id="604354.TSIB_0444"/>
<dbReference type="GeneID" id="8095430"/>
<dbReference type="KEGG" id="tsi:TSIB_0444"/>
<dbReference type="eggNOG" id="arCOG04229">
    <property type="taxonomic scope" value="Archaea"/>
</dbReference>
<dbReference type="HOGENOM" id="CLU_128576_0_0_2"/>
<dbReference type="OrthoDB" id="7000at2157"/>
<dbReference type="Proteomes" id="UP000009079">
    <property type="component" value="Chromosome"/>
</dbReference>
<dbReference type="GO" id="GO:0009347">
    <property type="term" value="C:aspartate carbamoyltransferase complex"/>
    <property type="evidence" value="ECO:0007669"/>
    <property type="project" value="InterPro"/>
</dbReference>
<dbReference type="GO" id="GO:0046872">
    <property type="term" value="F:metal ion binding"/>
    <property type="evidence" value="ECO:0007669"/>
    <property type="project" value="UniProtKB-KW"/>
</dbReference>
<dbReference type="GO" id="GO:0006207">
    <property type="term" value="P:'de novo' pyrimidine nucleobase biosynthetic process"/>
    <property type="evidence" value="ECO:0007669"/>
    <property type="project" value="InterPro"/>
</dbReference>
<dbReference type="GO" id="GO:0006221">
    <property type="term" value="P:pyrimidine nucleotide biosynthetic process"/>
    <property type="evidence" value="ECO:0007669"/>
    <property type="project" value="UniProtKB-UniRule"/>
</dbReference>
<dbReference type="Gene3D" id="2.30.30.20">
    <property type="entry name" value="Aspartate carbamoyltransferase regulatory subunit, C-terminal domain"/>
    <property type="match status" value="1"/>
</dbReference>
<dbReference type="Gene3D" id="3.30.70.140">
    <property type="entry name" value="Aspartate carbamoyltransferase regulatory subunit, N-terminal domain"/>
    <property type="match status" value="1"/>
</dbReference>
<dbReference type="HAMAP" id="MF_00002">
    <property type="entry name" value="Asp_carb_tr_reg"/>
    <property type="match status" value="1"/>
</dbReference>
<dbReference type="InterPro" id="IPR020545">
    <property type="entry name" value="Asp_carbamoyltransf_reg_N"/>
</dbReference>
<dbReference type="InterPro" id="IPR002801">
    <property type="entry name" value="Asp_carbamoylTrfase_reg"/>
</dbReference>
<dbReference type="InterPro" id="IPR020542">
    <property type="entry name" value="Asp_carbamoyltrfase_reg_C"/>
</dbReference>
<dbReference type="InterPro" id="IPR036792">
    <property type="entry name" value="Asp_carbatrfase_reg_C_sf"/>
</dbReference>
<dbReference type="InterPro" id="IPR036793">
    <property type="entry name" value="Asp_carbatrfase_reg_N_sf"/>
</dbReference>
<dbReference type="NCBIfam" id="TIGR00240">
    <property type="entry name" value="ATCase_reg"/>
    <property type="match status" value="1"/>
</dbReference>
<dbReference type="PANTHER" id="PTHR35805">
    <property type="entry name" value="ASPARTATE CARBAMOYLTRANSFERASE REGULATORY CHAIN"/>
    <property type="match status" value="1"/>
</dbReference>
<dbReference type="PANTHER" id="PTHR35805:SF1">
    <property type="entry name" value="ASPARTATE CARBAMOYLTRANSFERASE REGULATORY CHAIN"/>
    <property type="match status" value="1"/>
</dbReference>
<dbReference type="Pfam" id="PF01948">
    <property type="entry name" value="PyrI"/>
    <property type="match status" value="1"/>
</dbReference>
<dbReference type="Pfam" id="PF02748">
    <property type="entry name" value="PyrI_C"/>
    <property type="match status" value="1"/>
</dbReference>
<dbReference type="SUPFAM" id="SSF57825">
    <property type="entry name" value="Aspartate carbamoyltransferase, Regulatory-chain, C-terminal domain"/>
    <property type="match status" value="1"/>
</dbReference>
<dbReference type="SUPFAM" id="SSF54893">
    <property type="entry name" value="Aspartate carbamoyltransferase, Regulatory-chain, N-terminal domain"/>
    <property type="match status" value="1"/>
</dbReference>
<organism>
    <name type="scientific">Thermococcus sibiricus (strain DSM 12597 / MM 739)</name>
    <dbReference type="NCBI Taxonomy" id="604354"/>
    <lineage>
        <taxon>Archaea</taxon>
        <taxon>Methanobacteriati</taxon>
        <taxon>Methanobacteriota</taxon>
        <taxon>Thermococci</taxon>
        <taxon>Thermococcales</taxon>
        <taxon>Thermococcaceae</taxon>
        <taxon>Thermococcus</taxon>
    </lineage>
</organism>
<protein>
    <recommendedName>
        <fullName evidence="1">Aspartate carbamoyltransferase regulatory chain</fullName>
    </recommendedName>
</protein>
<feature type="chain" id="PRO_1000201621" description="Aspartate carbamoyltransferase regulatory chain">
    <location>
        <begin position="1"/>
        <end position="150"/>
    </location>
</feature>
<feature type="binding site" evidence="1">
    <location>
        <position position="105"/>
    </location>
    <ligand>
        <name>Zn(2+)</name>
        <dbReference type="ChEBI" id="CHEBI:29105"/>
    </ligand>
</feature>
<feature type="binding site" evidence="1">
    <location>
        <position position="110"/>
    </location>
    <ligand>
        <name>Zn(2+)</name>
        <dbReference type="ChEBI" id="CHEBI:29105"/>
    </ligand>
</feature>
<feature type="binding site" evidence="1">
    <location>
        <position position="133"/>
    </location>
    <ligand>
        <name>Zn(2+)</name>
        <dbReference type="ChEBI" id="CHEBI:29105"/>
    </ligand>
</feature>
<feature type="binding site" evidence="1">
    <location>
        <position position="136"/>
    </location>
    <ligand>
        <name>Zn(2+)</name>
        <dbReference type="ChEBI" id="CHEBI:29105"/>
    </ligand>
</feature>
<proteinExistence type="inferred from homology"/>
<reference key="1">
    <citation type="journal article" date="2009" name="Appl. Environ. Microbiol.">
        <title>Metabolic versatility and indigenous origin of the archaeon Thermococcus sibiricus, isolated from a siberian oil reservoir, as revealed by genome analysis.</title>
        <authorList>
            <person name="Mardanov A.V."/>
            <person name="Ravin N.V."/>
            <person name="Svetlitchnyi V.A."/>
            <person name="Beletsky A.V."/>
            <person name="Miroshnichenko M.L."/>
            <person name="Bonch-Osmolovskaya E.A."/>
            <person name="Skryabin K.G."/>
        </authorList>
    </citation>
    <scope>NUCLEOTIDE SEQUENCE [LARGE SCALE GENOMIC DNA]</scope>
    <source>
        <strain>DSM 12597 / MM 739</strain>
    </source>
</reference>
<gene>
    <name evidence="1" type="primary">pyrI</name>
    <name type="ordered locus">TSIB_0444</name>
</gene>
<evidence type="ECO:0000255" key="1">
    <source>
        <dbReference type="HAMAP-Rule" id="MF_00002"/>
    </source>
</evidence>
<comment type="function">
    <text evidence="1">Involved in allosteric regulation of aspartate carbamoyltransferase.</text>
</comment>
<comment type="cofactor">
    <cofactor evidence="1">
        <name>Zn(2+)</name>
        <dbReference type="ChEBI" id="CHEBI:29105"/>
    </cofactor>
    <text evidence="1">Binds 1 zinc ion per subunit.</text>
</comment>
<comment type="subunit">
    <text evidence="1">Contains catalytic and regulatory chains.</text>
</comment>
<comment type="similarity">
    <text evidence="1">Belongs to the PyrI family.</text>
</comment>